<protein>
    <recommendedName>
        <fullName>Tyrosine-protein phosphatase 6</fullName>
        <ecNumber>3.1.3.48</ecNumber>
    </recommendedName>
</protein>
<dbReference type="EC" id="3.1.3.48"/>
<dbReference type="EMBL" id="M37991">
    <property type="protein sequence ID" value="AAA29824.1"/>
    <property type="molecule type" value="mRNA"/>
</dbReference>
<dbReference type="SMR" id="P28198"/>
<dbReference type="GO" id="GO:0005737">
    <property type="term" value="C:cytoplasm"/>
    <property type="evidence" value="ECO:0007669"/>
    <property type="project" value="TreeGrafter"/>
</dbReference>
<dbReference type="GO" id="GO:0005634">
    <property type="term" value="C:nucleus"/>
    <property type="evidence" value="ECO:0007669"/>
    <property type="project" value="TreeGrafter"/>
</dbReference>
<dbReference type="GO" id="GO:0004726">
    <property type="term" value="F:non-membrane spanning protein tyrosine phosphatase activity"/>
    <property type="evidence" value="ECO:0007669"/>
    <property type="project" value="InterPro"/>
</dbReference>
<dbReference type="Gene3D" id="3.90.190.10">
    <property type="entry name" value="Protein tyrosine phosphatase superfamily"/>
    <property type="match status" value="1"/>
</dbReference>
<dbReference type="InterPro" id="IPR029021">
    <property type="entry name" value="Prot-tyrosine_phosphatase-like"/>
</dbReference>
<dbReference type="InterPro" id="IPR047170">
    <property type="entry name" value="PTN12/18/22"/>
</dbReference>
<dbReference type="InterPro" id="IPR000242">
    <property type="entry name" value="PTP_cat"/>
</dbReference>
<dbReference type="PANTHER" id="PTHR45983:SF2">
    <property type="entry name" value="PROTEIN-TYROSINE-PHOSPHATASE"/>
    <property type="match status" value="1"/>
</dbReference>
<dbReference type="PANTHER" id="PTHR45983">
    <property type="entry name" value="TYROSINE PHOSPHATSE N18, PUTATIVE-RELATED"/>
    <property type="match status" value="1"/>
</dbReference>
<dbReference type="Pfam" id="PF00102">
    <property type="entry name" value="Y_phosphatase"/>
    <property type="match status" value="1"/>
</dbReference>
<dbReference type="SUPFAM" id="SSF52799">
    <property type="entry name" value="(Phosphotyrosine protein) phosphatases II"/>
    <property type="match status" value="1"/>
</dbReference>
<dbReference type="PROSITE" id="PS50055">
    <property type="entry name" value="TYR_PHOSPHATASE_PTP"/>
    <property type="match status" value="1"/>
</dbReference>
<evidence type="ECO:0000250" key="1"/>
<evidence type="ECO:0000255" key="2">
    <source>
        <dbReference type="PROSITE-ProRule" id="PRU00160"/>
    </source>
</evidence>
<evidence type="ECO:0000255" key="3">
    <source>
        <dbReference type="PROSITE-ProRule" id="PRU10044"/>
    </source>
</evidence>
<evidence type="ECO:0000305" key="4"/>
<name>PTP6_STYPL</name>
<accession>P28198</accession>
<proteinExistence type="evidence at transcript level"/>
<organism>
    <name type="scientific">Styela plicata</name>
    <name type="common">Wrinkled sea squirt</name>
    <name type="synonym">Ascidia plicata</name>
    <dbReference type="NCBI Taxonomy" id="7726"/>
    <lineage>
        <taxon>Eukaryota</taxon>
        <taxon>Metazoa</taxon>
        <taxon>Chordata</taxon>
        <taxon>Tunicata</taxon>
        <taxon>Ascidiacea</taxon>
        <taxon>Stolidobranchia</taxon>
        <taxon>Styelidae</taxon>
        <taxon>Styela</taxon>
    </lineage>
</organism>
<keyword id="KW-0378">Hydrolase</keyword>
<keyword id="KW-0904">Protein phosphatase</keyword>
<gene>
    <name type="primary">STY-6</name>
</gene>
<comment type="catalytic activity">
    <reaction evidence="3">
        <text>O-phospho-L-tyrosyl-[protein] + H2O = L-tyrosyl-[protein] + phosphate</text>
        <dbReference type="Rhea" id="RHEA:10684"/>
        <dbReference type="Rhea" id="RHEA-COMP:10136"/>
        <dbReference type="Rhea" id="RHEA-COMP:20101"/>
        <dbReference type="ChEBI" id="CHEBI:15377"/>
        <dbReference type="ChEBI" id="CHEBI:43474"/>
        <dbReference type="ChEBI" id="CHEBI:46858"/>
        <dbReference type="ChEBI" id="CHEBI:61978"/>
        <dbReference type="EC" id="3.1.3.48"/>
    </reaction>
</comment>
<comment type="miscellaneous">
    <text>STY 3 and STY 6 may represent a double domain transmembrane protein tyrosine phosphatase.</text>
</comment>
<comment type="similarity">
    <text evidence="4">Belongs to the protein-tyrosine phosphatase family.</text>
</comment>
<sequence length="109" mass="12744">YNINVIVMVCREIELGKKKCERYWADRGDSKRFGDITVTLSKKEDLKDGYCLRTIKAEKGNEIRYIKQFHYTSWPDHGVPKTCLEILSLINHVRDVQSYSEDETTPLCV</sequence>
<feature type="chain" id="PRO_0000094894" description="Tyrosine-protein phosphatase 6">
    <location>
        <begin position="1" status="less than"/>
        <end position="109" status="greater than"/>
    </location>
</feature>
<feature type="domain" description="Tyrosine-protein phosphatase" evidence="2">
    <location>
        <begin position="1" status="less than"/>
        <end position="109" status="greater than"/>
    </location>
</feature>
<feature type="binding site" evidence="1">
    <location>
        <position position="76"/>
    </location>
    <ligand>
        <name>substrate</name>
    </ligand>
</feature>
<feature type="non-terminal residue">
    <location>
        <position position="1"/>
    </location>
</feature>
<feature type="non-terminal residue">
    <location>
        <position position="109"/>
    </location>
</feature>
<reference key="1">
    <citation type="journal article" date="1991" name="Immunogenetics">
        <title>Protein tyrosine phosphatase domains from the protochordate Styela plicata.</title>
        <authorList>
            <person name="Matthews R.J."/>
            <person name="Flores E."/>
            <person name="Thomas M.L."/>
        </authorList>
    </citation>
    <scope>NUCLEOTIDE SEQUENCE [MRNA]</scope>
</reference>